<dbReference type="EC" id="2.3.1.-" evidence="2 3"/>
<dbReference type="EMBL" id="DS027698">
    <property type="protein sequence ID" value="EAW16182.1"/>
    <property type="molecule type" value="Genomic_DNA"/>
</dbReference>
<dbReference type="RefSeq" id="XP_001258079.1">
    <property type="nucleotide sequence ID" value="XM_001258078.1"/>
</dbReference>
<dbReference type="SMR" id="A1DN11"/>
<dbReference type="STRING" id="331117.A1DN11"/>
<dbReference type="EnsemblFungi" id="EAW16182">
    <property type="protein sequence ID" value="EAW16182"/>
    <property type="gene ID" value="NFIA_055310"/>
</dbReference>
<dbReference type="GeneID" id="4584594"/>
<dbReference type="KEGG" id="nfi:NFIA_055310"/>
<dbReference type="VEuPathDB" id="FungiDB:NFIA_055310"/>
<dbReference type="eggNOG" id="ENOG502RPW3">
    <property type="taxonomic scope" value="Eukaryota"/>
</dbReference>
<dbReference type="HOGENOM" id="CLU_026450_1_1_1"/>
<dbReference type="OMA" id="QCFEKVF"/>
<dbReference type="OrthoDB" id="1862401at2759"/>
<dbReference type="BioCyc" id="MetaCyc:MONOMER-18808"/>
<dbReference type="Proteomes" id="UP000006702">
    <property type="component" value="Unassembled WGS sequence"/>
</dbReference>
<dbReference type="GO" id="GO:0016746">
    <property type="term" value="F:acyltransferase activity"/>
    <property type="evidence" value="ECO:0007669"/>
    <property type="project" value="UniProtKB-KW"/>
</dbReference>
<dbReference type="GO" id="GO:0009820">
    <property type="term" value="P:alkaloid metabolic process"/>
    <property type="evidence" value="ECO:0007669"/>
    <property type="project" value="UniProtKB-KW"/>
</dbReference>
<dbReference type="Gene3D" id="3.30.559.10">
    <property type="entry name" value="Chloramphenicol acetyltransferase-like domain"/>
    <property type="match status" value="2"/>
</dbReference>
<dbReference type="InterPro" id="IPR023213">
    <property type="entry name" value="CAT-like_dom_sf"/>
</dbReference>
<dbReference type="InterPro" id="IPR051283">
    <property type="entry name" value="Sec_Metabolite_Acyltrans"/>
</dbReference>
<dbReference type="PANTHER" id="PTHR31896">
    <property type="entry name" value="FAMILY REGULATORY PROTEIN, PUTATIVE (AFU_ORTHOLOGUE AFUA_3G14730)-RELATED"/>
    <property type="match status" value="1"/>
</dbReference>
<dbReference type="PANTHER" id="PTHR31896:SF64">
    <property type="entry name" value="TRICHOTHECENE 3-O-ACETYLTRANSFERASE"/>
    <property type="match status" value="1"/>
</dbReference>
<dbReference type="Pfam" id="PF02458">
    <property type="entry name" value="Transferase"/>
    <property type="match status" value="2"/>
</dbReference>
<organism>
    <name type="scientific">Neosartorya fischeri (strain ATCC 1020 / DSM 3700 / CBS 544.65 / FGSC A1164 / JCM 1740 / NRRL 181 / WB 181)</name>
    <name type="common">Aspergillus fischerianus</name>
    <dbReference type="NCBI Taxonomy" id="331117"/>
    <lineage>
        <taxon>Eukaryota</taxon>
        <taxon>Fungi</taxon>
        <taxon>Dikarya</taxon>
        <taxon>Ascomycota</taxon>
        <taxon>Pezizomycotina</taxon>
        <taxon>Eurotiomycetes</taxon>
        <taxon>Eurotiomycetidae</taxon>
        <taxon>Eurotiales</taxon>
        <taxon>Aspergillaceae</taxon>
        <taxon>Aspergillus</taxon>
        <taxon>Aspergillus subgen. Fumigati</taxon>
    </lineage>
</organism>
<reference key="1">
    <citation type="journal article" date="2008" name="PLoS Genet.">
        <title>Genomic islands in the pathogenic filamentous fungus Aspergillus fumigatus.</title>
        <authorList>
            <person name="Fedorova N.D."/>
            <person name="Khaldi N."/>
            <person name="Joardar V.S."/>
            <person name="Maiti R."/>
            <person name="Amedeo P."/>
            <person name="Anderson M.J."/>
            <person name="Crabtree J."/>
            <person name="Silva J.C."/>
            <person name="Badger J.H."/>
            <person name="Albarraq A."/>
            <person name="Angiuoli S."/>
            <person name="Bussey H."/>
            <person name="Bowyer P."/>
            <person name="Cotty P.J."/>
            <person name="Dyer P.S."/>
            <person name="Egan A."/>
            <person name="Galens K."/>
            <person name="Fraser-Liggett C.M."/>
            <person name="Haas B.J."/>
            <person name="Inman J.M."/>
            <person name="Kent R."/>
            <person name="Lemieux S."/>
            <person name="Malavazi I."/>
            <person name="Orvis J."/>
            <person name="Roemer T."/>
            <person name="Ronning C.M."/>
            <person name="Sundaram J.P."/>
            <person name="Sutton G."/>
            <person name="Turner G."/>
            <person name="Venter J.C."/>
            <person name="White O.R."/>
            <person name="Whitty B.R."/>
            <person name="Youngman P."/>
            <person name="Wolfe K.H."/>
            <person name="Goldman G.H."/>
            <person name="Wortman J.R."/>
            <person name="Jiang B."/>
            <person name="Denning D.W."/>
            <person name="Nierman W.C."/>
        </authorList>
    </citation>
    <scope>NUCLEOTIDE SEQUENCE [LARGE SCALE GENOMIC DNA]</scope>
    <source>
        <strain>ATCC 1020 / DSM 3700 / CBS 544.65 / FGSC A1164 / JCM 1740 / NRRL 181 / WB 181</strain>
    </source>
</reference>
<reference key="2">
    <citation type="journal article" date="2009" name="J. Biol. Chem.">
        <title>Acetylaszonalenin biosynthesis in Neosartorya fischeri. Identification of the biosynthetic gene cluster by genomic mining and functional proof of the genes by biochemical investigation.</title>
        <authorList>
            <person name="Yin W.B."/>
            <person name="Grundmann A."/>
            <person name="Cheng J."/>
            <person name="Li S.M."/>
        </authorList>
    </citation>
    <scope>FUNCTION</scope>
    <scope>CATALYTIC ACTIVITY</scope>
    <scope>BIOPHYSICOCHEMICAL PROPERTIES</scope>
    <scope>PATHWAY</scope>
</reference>
<reference key="3">
    <citation type="journal article" date="2010" name="Org. Biomol. Chem.">
        <title>Reconstruction of pyrrolo[2,3-b]indoles carrying an alpha-configured reverse C3-dimethylallyl moiety by using recombinant enzymes.</title>
        <authorList>
            <person name="Yin W.B."/>
            <person name="Xie X.L."/>
            <person name="Matuschek M."/>
            <person name="Li S.M."/>
        </authorList>
    </citation>
    <scope>FUNCTION</scope>
    <scope>CATALYTIC ACTIVITY</scope>
</reference>
<accession>A1DN11</accession>
<evidence type="ECO:0000250" key="1">
    <source>
        <dbReference type="UniProtKB" id="Q4WZ64"/>
    </source>
</evidence>
<evidence type="ECO:0000269" key="2">
    <source>
    </source>
</evidence>
<evidence type="ECO:0000269" key="3">
    <source>
    </source>
</evidence>
<evidence type="ECO:0000303" key="4">
    <source>
    </source>
</evidence>
<evidence type="ECO:0000305" key="5"/>
<keyword id="KW-0012">Acyltransferase</keyword>
<keyword id="KW-0017">Alkaloid metabolism</keyword>
<keyword id="KW-1185">Reference proteome</keyword>
<keyword id="KW-0808">Transferase</keyword>
<protein>
    <recommendedName>
        <fullName evidence="4">O-acetyltransferase anaAT</fullName>
        <ecNumber evidence="2 3">2.3.1.-</ecNumber>
    </recommendedName>
    <alternativeName>
        <fullName evidence="4">Acetylaszonalenin synthesis protein anaAT</fullName>
    </alternativeName>
</protein>
<sequence>MTVTISFEPYVGSSVDALSIPLYLRCQLVFKLSKPLAAVPLLESGVNRLVQALPFLSGEFTAVPASDGGKEILLVRPVLNFELSRILKIKYHETSLRHVCKQMNRPSSQGGDLPHEPYMPYPRLPDPSRPQPIVGFQVNVHTDGIILSVATHHCSFDATGMGSIVQNLAACCRSPPSDEPDLTTSPAQEAEARKVLSQVRETPFDPKMFPEYRPLDSMLSYYKGVQSALQGRQTTIVNRCFTIAADKINALKRRCNQLIPEMVKKYGLSTEDAIGSAWVSSNDVVAALLWTCINRARYPEIRERSVHQLPPDLLHATSSLGVPVNVRSRLSPPLPKSTLGNAVCLLREKVPLQFFALPSHANMEATSSVCADHSGDDEWALSFCRVAYGLRAKLNAIDDDYIRDYISYVQKSPCHLSVTLDTENLYLSNWREIGVYDADFGGMLGKPLRMRAPDGYTDGLIFVMAQRSEDKSAPWEFNISLEASTMKRIVHDPLWCKYVELDAFWHGEE</sequence>
<comment type="function">
    <text evidence="2 3">O-acetyltransferase; part of the gene cluster that mediates the biosynthesis of the prenylated pyrroloindoline diketopiperazine acetylaszonalenin (PubMed:19001367). The first step in the pathway is the formation of (R)-benzodiazepinedione by condensation of tryptophan and anthranilic acid catalyzed by the non-ribosomal peptide synthetase anaPS (PubMed:19001367). The prenyltransferase anaPT then converts (R)-benzodiazepinedione to aszonalenin in the presence of dimethylallyl diphosphate (DMAPP) via C3-prenylation (PubMed:19001367, PubMed:20165805). The last step in the biosynthesis of acetylaszonalenin via acetylation of aszonalenin at position N1 catalyzed by anaAT (PubMed:19001367, PubMed:20165805).</text>
</comment>
<comment type="catalytic activity">
    <reaction evidence="2 3">
        <text>(2R,3S,11R)-aszonalenin + acetyl-CoA = (2R,3S,11R)-acetylaszonalenin + CoA</text>
        <dbReference type="Rhea" id="RHEA:73191"/>
        <dbReference type="ChEBI" id="CHEBI:57287"/>
        <dbReference type="ChEBI" id="CHEBI:57288"/>
        <dbReference type="ChEBI" id="CHEBI:192681"/>
        <dbReference type="ChEBI" id="CHEBI:192682"/>
    </reaction>
    <physiologicalReaction direction="left-to-right" evidence="2 3">
        <dbReference type="Rhea" id="RHEA:73192"/>
    </physiologicalReaction>
</comment>
<comment type="biophysicochemical properties">
    <kinetics>
        <KM evidence="2">61 uM for aszonalenin</KM>
        <KM evidence="2">96 uM for acetyl coenzyme A</KM>
    </kinetics>
</comment>
<comment type="pathway">
    <text evidence="2">Alkaloid biosynthesis.</text>
</comment>
<comment type="subunit">
    <text evidence="1">Monomer.</text>
</comment>
<comment type="similarity">
    <text evidence="5">Belongs to the fumigaclavine B O-acetyltransferase family.</text>
</comment>
<name>ANAAT_NEOFI</name>
<feature type="chain" id="PRO_0000438418" description="O-acetyltransferase anaAT">
    <location>
        <begin position="1"/>
        <end position="509"/>
    </location>
</feature>
<proteinExistence type="evidence at protein level"/>
<gene>
    <name evidence="4" type="primary">anaAT</name>
    <name type="ORF">NFIA_055310</name>
</gene>